<keyword id="KW-0450">Lipoyl</keyword>
<keyword id="KW-1185">Reference proteome</keyword>
<feature type="chain" id="PRO_0000166256" description="Glycine cleavage system H protein">
    <location>
        <begin position="1"/>
        <end position="127"/>
    </location>
</feature>
<feature type="domain" description="Lipoyl-binding" evidence="2">
    <location>
        <begin position="24"/>
        <end position="106"/>
    </location>
</feature>
<feature type="modified residue" description="N6-lipoyllysine" evidence="1">
    <location>
        <position position="65"/>
    </location>
</feature>
<reference key="1">
    <citation type="journal article" date="2002" name="DNA Res.">
        <title>Complete genome structure of the thermophilic cyanobacterium Thermosynechococcus elongatus BP-1.</title>
        <authorList>
            <person name="Nakamura Y."/>
            <person name="Kaneko T."/>
            <person name="Sato S."/>
            <person name="Ikeuchi M."/>
            <person name="Katoh H."/>
            <person name="Sasamoto S."/>
            <person name="Watanabe A."/>
            <person name="Iriguchi M."/>
            <person name="Kawashima K."/>
            <person name="Kimura T."/>
            <person name="Kishida Y."/>
            <person name="Kiyokawa C."/>
            <person name="Kohara M."/>
            <person name="Matsumoto M."/>
            <person name="Matsuno A."/>
            <person name="Nakazaki N."/>
            <person name="Shimpo S."/>
            <person name="Sugimoto M."/>
            <person name="Takeuchi C."/>
            <person name="Yamada M."/>
            <person name="Tabata S."/>
        </authorList>
    </citation>
    <scope>NUCLEOTIDE SEQUENCE [LARGE SCALE GENOMIC DNA]</scope>
    <source>
        <strain>NIES-2133 / IAM M-273 / BP-1</strain>
    </source>
</reference>
<sequence length="127" mass="13527">MTLTYPEDLQYLDSHEYLRLEGDTATLGISAFAVDQLGDIVFVELPAVGDALEPGERFGTIESVKAVEDLYAPLGGTVIAVNQAVIDNPEQIAADPYGEGWLVKVQVSTLPTGLLSAADYRALVEGS</sequence>
<evidence type="ECO:0000255" key="1">
    <source>
        <dbReference type="HAMAP-Rule" id="MF_00272"/>
    </source>
</evidence>
<evidence type="ECO:0000255" key="2">
    <source>
        <dbReference type="PROSITE-ProRule" id="PRU01066"/>
    </source>
</evidence>
<evidence type="ECO:0000305" key="3"/>
<comment type="function">
    <text evidence="1">The glycine cleavage system catalyzes the degradation of glycine. The H protein shuttles the methylamine group of glycine from the P protein to the T protein.</text>
</comment>
<comment type="cofactor">
    <cofactor evidence="1">
        <name>(R)-lipoate</name>
        <dbReference type="ChEBI" id="CHEBI:83088"/>
    </cofactor>
    <text evidence="1">Binds 1 lipoyl cofactor covalently.</text>
</comment>
<comment type="subunit">
    <text evidence="1">The glycine cleavage system is composed of four proteins: P, T, L and H.</text>
</comment>
<comment type="similarity">
    <text evidence="1">Belongs to the GcvH family.</text>
</comment>
<comment type="sequence caution" evidence="3">
    <conflict type="erroneous initiation">
        <sequence resource="EMBL-CDS" id="BAC09230"/>
    </conflict>
</comment>
<gene>
    <name evidence="1" type="primary">gcvH</name>
    <name type="ordered locus">tlr1678</name>
</gene>
<dbReference type="EMBL" id="BA000039">
    <property type="protein sequence ID" value="BAC09230.1"/>
    <property type="status" value="ALT_INIT"/>
    <property type="molecule type" value="Genomic_DNA"/>
</dbReference>
<dbReference type="RefSeq" id="NP_682468.2">
    <property type="nucleotide sequence ID" value="NC_004113.1"/>
</dbReference>
<dbReference type="RefSeq" id="WP_011057515.1">
    <property type="nucleotide sequence ID" value="NC_004113.1"/>
</dbReference>
<dbReference type="SMR" id="Q8DIB2"/>
<dbReference type="STRING" id="197221.gene:10748280"/>
<dbReference type="EnsemblBacteria" id="BAC09230">
    <property type="protein sequence ID" value="BAC09230"/>
    <property type="gene ID" value="BAC09230"/>
</dbReference>
<dbReference type="KEGG" id="tel:tlr1678"/>
<dbReference type="PATRIC" id="fig|197221.4.peg.1759"/>
<dbReference type="eggNOG" id="COG0509">
    <property type="taxonomic scope" value="Bacteria"/>
</dbReference>
<dbReference type="Proteomes" id="UP000000440">
    <property type="component" value="Chromosome"/>
</dbReference>
<dbReference type="GO" id="GO:0005829">
    <property type="term" value="C:cytosol"/>
    <property type="evidence" value="ECO:0007669"/>
    <property type="project" value="TreeGrafter"/>
</dbReference>
<dbReference type="GO" id="GO:0005960">
    <property type="term" value="C:glycine cleavage complex"/>
    <property type="evidence" value="ECO:0007669"/>
    <property type="project" value="InterPro"/>
</dbReference>
<dbReference type="GO" id="GO:0019464">
    <property type="term" value="P:glycine decarboxylation via glycine cleavage system"/>
    <property type="evidence" value="ECO:0007669"/>
    <property type="project" value="UniProtKB-UniRule"/>
</dbReference>
<dbReference type="CDD" id="cd06848">
    <property type="entry name" value="GCS_H"/>
    <property type="match status" value="1"/>
</dbReference>
<dbReference type="Gene3D" id="2.40.50.100">
    <property type="match status" value="1"/>
</dbReference>
<dbReference type="HAMAP" id="MF_00272">
    <property type="entry name" value="GcvH"/>
    <property type="match status" value="1"/>
</dbReference>
<dbReference type="InterPro" id="IPR003016">
    <property type="entry name" value="2-oxoA_DH_lipoyl-BS"/>
</dbReference>
<dbReference type="InterPro" id="IPR000089">
    <property type="entry name" value="Biotin_lipoyl"/>
</dbReference>
<dbReference type="InterPro" id="IPR002930">
    <property type="entry name" value="GCV_H"/>
</dbReference>
<dbReference type="InterPro" id="IPR033753">
    <property type="entry name" value="GCV_H/Fam206"/>
</dbReference>
<dbReference type="InterPro" id="IPR017453">
    <property type="entry name" value="GCV_H_sub"/>
</dbReference>
<dbReference type="InterPro" id="IPR011053">
    <property type="entry name" value="Single_hybrid_motif"/>
</dbReference>
<dbReference type="NCBIfam" id="TIGR00527">
    <property type="entry name" value="gcvH"/>
    <property type="match status" value="1"/>
</dbReference>
<dbReference type="NCBIfam" id="NF002270">
    <property type="entry name" value="PRK01202.1"/>
    <property type="match status" value="1"/>
</dbReference>
<dbReference type="PANTHER" id="PTHR11715">
    <property type="entry name" value="GLYCINE CLEAVAGE SYSTEM H PROTEIN"/>
    <property type="match status" value="1"/>
</dbReference>
<dbReference type="PANTHER" id="PTHR11715:SF3">
    <property type="entry name" value="GLYCINE CLEAVAGE SYSTEM H PROTEIN-RELATED"/>
    <property type="match status" value="1"/>
</dbReference>
<dbReference type="Pfam" id="PF01597">
    <property type="entry name" value="GCV_H"/>
    <property type="match status" value="1"/>
</dbReference>
<dbReference type="SUPFAM" id="SSF51230">
    <property type="entry name" value="Single hybrid motif"/>
    <property type="match status" value="1"/>
</dbReference>
<dbReference type="PROSITE" id="PS50968">
    <property type="entry name" value="BIOTINYL_LIPOYL"/>
    <property type="match status" value="1"/>
</dbReference>
<dbReference type="PROSITE" id="PS00189">
    <property type="entry name" value="LIPOYL"/>
    <property type="match status" value="1"/>
</dbReference>
<accession>Q8DIB2</accession>
<proteinExistence type="inferred from homology"/>
<protein>
    <recommendedName>
        <fullName evidence="1">Glycine cleavage system H protein</fullName>
    </recommendedName>
</protein>
<name>GCSH_THEVB</name>
<organism>
    <name type="scientific">Thermosynechococcus vestitus (strain NIES-2133 / IAM M-273 / BP-1)</name>
    <dbReference type="NCBI Taxonomy" id="197221"/>
    <lineage>
        <taxon>Bacteria</taxon>
        <taxon>Bacillati</taxon>
        <taxon>Cyanobacteriota</taxon>
        <taxon>Cyanophyceae</taxon>
        <taxon>Acaryochloridales</taxon>
        <taxon>Thermosynechococcaceae</taxon>
        <taxon>Thermosynechococcus</taxon>
    </lineage>
</organism>